<reference key="1">
    <citation type="journal article" date="2004" name="Proc. Natl. Acad. Sci. U.S.A.">
        <title>The louse-borne human pathogen Bartonella quintana is a genomic derivative of the zoonotic agent Bartonella henselae.</title>
        <authorList>
            <person name="Alsmark U.C.M."/>
            <person name="Frank A.C."/>
            <person name="Karlberg E.O."/>
            <person name="Legault B.-A."/>
            <person name="Ardell D.H."/>
            <person name="Canbaeck B."/>
            <person name="Eriksson A.-S."/>
            <person name="Naeslund A.K."/>
            <person name="Handley S.A."/>
            <person name="Huvet M."/>
            <person name="La Scola B."/>
            <person name="Holmberg M."/>
            <person name="Andersson S.G.E."/>
        </authorList>
    </citation>
    <scope>NUCLEOTIDE SEQUENCE [LARGE SCALE GENOMIC DNA]</scope>
    <source>
        <strain>ATCC 49882 / DSM 28221 / CCUG 30454 / Houston 1</strain>
    </source>
</reference>
<sequence>MKLTWIKCMSKTERISDIDEPRLFEENGVEAHIAAFVMPLLKPLGFRLVRVKLLGLNGLTLQIMVERPDGSMTVEDCETVSRTVSPLLDVQNVIERKYHLEISSPGIDRPLVRKSDFFHWQGHIAKIETKIILEGRRKFRGTLTNITQDGFTLNTDKAAYGESMYISIPFDDIIDAHLVLTDELIRDALKKNKDLSQQFISEDNQKLSKQERNYKN</sequence>
<keyword id="KW-0963">Cytoplasm</keyword>
<keyword id="KW-0690">Ribosome biogenesis</keyword>
<evidence type="ECO:0000255" key="1">
    <source>
        <dbReference type="HAMAP-Rule" id="MF_01077"/>
    </source>
</evidence>
<name>RIMP_BARHE</name>
<protein>
    <recommendedName>
        <fullName evidence="1">Ribosome maturation factor RimP</fullName>
    </recommendedName>
</protein>
<proteinExistence type="inferred from homology"/>
<dbReference type="EMBL" id="BX897699">
    <property type="protein sequence ID" value="CAF27030.1"/>
    <property type="molecule type" value="Genomic_DNA"/>
</dbReference>
<dbReference type="RefSeq" id="WP_011180169.1">
    <property type="nucleotide sequence ID" value="NZ_LRIJ02000001.1"/>
</dbReference>
<dbReference type="SMR" id="Q6G4W4"/>
<dbReference type="PaxDb" id="283166-BH02180"/>
<dbReference type="EnsemblBacteria" id="CAF27030">
    <property type="protein sequence ID" value="CAF27030"/>
    <property type="gene ID" value="BH02180"/>
</dbReference>
<dbReference type="GeneID" id="92984885"/>
<dbReference type="KEGG" id="bhe:BH02180"/>
<dbReference type="eggNOG" id="COG0779">
    <property type="taxonomic scope" value="Bacteria"/>
</dbReference>
<dbReference type="OrthoDB" id="9805006at2"/>
<dbReference type="Proteomes" id="UP000000421">
    <property type="component" value="Chromosome"/>
</dbReference>
<dbReference type="GO" id="GO:0005829">
    <property type="term" value="C:cytosol"/>
    <property type="evidence" value="ECO:0007669"/>
    <property type="project" value="TreeGrafter"/>
</dbReference>
<dbReference type="GO" id="GO:0000028">
    <property type="term" value="P:ribosomal small subunit assembly"/>
    <property type="evidence" value="ECO:0007669"/>
    <property type="project" value="TreeGrafter"/>
</dbReference>
<dbReference type="GO" id="GO:0006412">
    <property type="term" value="P:translation"/>
    <property type="evidence" value="ECO:0007669"/>
    <property type="project" value="TreeGrafter"/>
</dbReference>
<dbReference type="CDD" id="cd01734">
    <property type="entry name" value="YlxS_C"/>
    <property type="match status" value="1"/>
</dbReference>
<dbReference type="Gene3D" id="3.30.300.70">
    <property type="entry name" value="RimP-like superfamily, N-terminal"/>
    <property type="match status" value="1"/>
</dbReference>
<dbReference type="HAMAP" id="MF_01077">
    <property type="entry name" value="RimP"/>
    <property type="match status" value="1"/>
</dbReference>
<dbReference type="InterPro" id="IPR003728">
    <property type="entry name" value="Ribosome_maturation_RimP"/>
</dbReference>
<dbReference type="InterPro" id="IPR028998">
    <property type="entry name" value="RimP_C"/>
</dbReference>
<dbReference type="InterPro" id="IPR036847">
    <property type="entry name" value="RimP_C_sf"/>
</dbReference>
<dbReference type="InterPro" id="IPR028989">
    <property type="entry name" value="RimP_N"/>
</dbReference>
<dbReference type="InterPro" id="IPR035956">
    <property type="entry name" value="RimP_N_sf"/>
</dbReference>
<dbReference type="NCBIfam" id="NF000932">
    <property type="entry name" value="PRK00092.2-5"/>
    <property type="match status" value="1"/>
</dbReference>
<dbReference type="PANTHER" id="PTHR33867">
    <property type="entry name" value="RIBOSOME MATURATION FACTOR RIMP"/>
    <property type="match status" value="1"/>
</dbReference>
<dbReference type="PANTHER" id="PTHR33867:SF1">
    <property type="entry name" value="RIBOSOME MATURATION FACTOR RIMP"/>
    <property type="match status" value="1"/>
</dbReference>
<dbReference type="Pfam" id="PF17384">
    <property type="entry name" value="DUF150_C"/>
    <property type="match status" value="1"/>
</dbReference>
<dbReference type="Pfam" id="PF02576">
    <property type="entry name" value="RimP_N"/>
    <property type="match status" value="1"/>
</dbReference>
<dbReference type="SUPFAM" id="SSF74942">
    <property type="entry name" value="YhbC-like, C-terminal domain"/>
    <property type="match status" value="1"/>
</dbReference>
<dbReference type="SUPFAM" id="SSF75420">
    <property type="entry name" value="YhbC-like, N-terminal domain"/>
    <property type="match status" value="1"/>
</dbReference>
<gene>
    <name evidence="1" type="primary">rimP</name>
    <name type="ordered locus">BH02180</name>
</gene>
<organism>
    <name type="scientific">Bartonella henselae (strain ATCC 49882 / DSM 28221 / CCUG 30454 / Houston 1)</name>
    <name type="common">Rochalimaea henselae</name>
    <dbReference type="NCBI Taxonomy" id="283166"/>
    <lineage>
        <taxon>Bacteria</taxon>
        <taxon>Pseudomonadati</taxon>
        <taxon>Pseudomonadota</taxon>
        <taxon>Alphaproteobacteria</taxon>
        <taxon>Hyphomicrobiales</taxon>
        <taxon>Bartonellaceae</taxon>
        <taxon>Bartonella</taxon>
    </lineage>
</organism>
<accession>Q6G4W4</accession>
<feature type="chain" id="PRO_0000181846" description="Ribosome maturation factor RimP">
    <location>
        <begin position="1"/>
        <end position="216"/>
    </location>
</feature>
<comment type="function">
    <text evidence="1">Required for maturation of 30S ribosomal subunits.</text>
</comment>
<comment type="subcellular location">
    <subcellularLocation>
        <location evidence="1">Cytoplasm</location>
    </subcellularLocation>
</comment>
<comment type="similarity">
    <text evidence="1">Belongs to the RimP family.</text>
</comment>